<keyword id="KW-0520">NAD</keyword>
<keyword id="KW-1185">Reference proteome</keyword>
<keyword id="KW-0808">Transferase</keyword>
<accession>B5ZQT5</accession>
<gene>
    <name evidence="1" type="primary">kptA</name>
    <name type="ordered locus">Rleg2_1928</name>
</gene>
<dbReference type="EC" id="2.7.1.-" evidence="1"/>
<dbReference type="EMBL" id="CP001191">
    <property type="protein sequence ID" value="ACI55213.1"/>
    <property type="molecule type" value="Genomic_DNA"/>
</dbReference>
<dbReference type="RefSeq" id="WP_012557801.1">
    <property type="nucleotide sequence ID" value="NC_011369.1"/>
</dbReference>
<dbReference type="SMR" id="B5ZQT5"/>
<dbReference type="STRING" id="395492.Rleg2_1928"/>
<dbReference type="KEGG" id="rlt:Rleg2_1928"/>
<dbReference type="eggNOG" id="COG1859">
    <property type="taxonomic scope" value="Bacteria"/>
</dbReference>
<dbReference type="HOGENOM" id="CLU_052998_4_0_5"/>
<dbReference type="Proteomes" id="UP000008330">
    <property type="component" value="Chromosome"/>
</dbReference>
<dbReference type="GO" id="GO:0003950">
    <property type="term" value="F:NAD+ poly-ADP-ribosyltransferase activity"/>
    <property type="evidence" value="ECO:0007669"/>
    <property type="project" value="InterPro"/>
</dbReference>
<dbReference type="GO" id="GO:0000215">
    <property type="term" value="F:tRNA 2'-phosphotransferase activity"/>
    <property type="evidence" value="ECO:0007669"/>
    <property type="project" value="TreeGrafter"/>
</dbReference>
<dbReference type="GO" id="GO:0006388">
    <property type="term" value="P:tRNA splicing, via endonucleolytic cleavage and ligation"/>
    <property type="evidence" value="ECO:0007669"/>
    <property type="project" value="UniProtKB-UniRule"/>
</dbReference>
<dbReference type="Gene3D" id="3.20.170.30">
    <property type="match status" value="1"/>
</dbReference>
<dbReference type="Gene3D" id="1.10.10.970">
    <property type="entry name" value="RNA 2'-phosphotransferase, Tpt1/KptA family, N-terminal domain"/>
    <property type="match status" value="1"/>
</dbReference>
<dbReference type="HAMAP" id="MF_00299">
    <property type="entry name" value="KptA"/>
    <property type="match status" value="1"/>
</dbReference>
<dbReference type="InterPro" id="IPR002745">
    <property type="entry name" value="Ptrans_KptA/Tpt1"/>
</dbReference>
<dbReference type="InterPro" id="IPR042081">
    <property type="entry name" value="RNA_2'-PTrans_C"/>
</dbReference>
<dbReference type="InterPro" id="IPR022928">
    <property type="entry name" value="RNA_2'-PTrans_KptA"/>
</dbReference>
<dbReference type="InterPro" id="IPR042080">
    <property type="entry name" value="RNA_2'-PTrans_N"/>
</dbReference>
<dbReference type="NCBIfam" id="NF002013">
    <property type="entry name" value="PRK00819.1-2"/>
    <property type="match status" value="1"/>
</dbReference>
<dbReference type="PANTHER" id="PTHR12684">
    <property type="entry name" value="PUTATIVE PHOSPHOTRANSFERASE"/>
    <property type="match status" value="1"/>
</dbReference>
<dbReference type="PANTHER" id="PTHR12684:SF2">
    <property type="entry name" value="TRNA 2'-PHOSPHOTRANSFERASE 1"/>
    <property type="match status" value="1"/>
</dbReference>
<dbReference type="Pfam" id="PF01885">
    <property type="entry name" value="PTS_2-RNA"/>
    <property type="match status" value="1"/>
</dbReference>
<dbReference type="SUPFAM" id="SSF56399">
    <property type="entry name" value="ADP-ribosylation"/>
    <property type="match status" value="1"/>
</dbReference>
<organism>
    <name type="scientific">Rhizobium leguminosarum bv. trifolii (strain WSM2304)</name>
    <dbReference type="NCBI Taxonomy" id="395492"/>
    <lineage>
        <taxon>Bacteria</taxon>
        <taxon>Pseudomonadati</taxon>
        <taxon>Pseudomonadota</taxon>
        <taxon>Alphaproteobacteria</taxon>
        <taxon>Hyphomicrobiales</taxon>
        <taxon>Rhizobiaceae</taxon>
        <taxon>Rhizobium/Agrobacterium group</taxon>
        <taxon>Rhizobium</taxon>
    </lineage>
</organism>
<feature type="chain" id="PRO_1000115314" description="Probable RNA 2'-phosphotransferase">
    <location>
        <begin position="1"/>
        <end position="184"/>
    </location>
</feature>
<name>KPTA_RHILW</name>
<reference key="1">
    <citation type="journal article" date="2010" name="Stand. Genomic Sci.">
        <title>Complete genome sequence of Rhizobium leguminosarum bv trifolii strain WSM2304, an effective microsymbiont of the South American clover Trifolium polymorphum.</title>
        <authorList>
            <person name="Reeve W."/>
            <person name="O'Hara G."/>
            <person name="Chain P."/>
            <person name="Ardley J."/>
            <person name="Brau L."/>
            <person name="Nandesena K."/>
            <person name="Tiwari R."/>
            <person name="Malfatti S."/>
            <person name="Kiss H."/>
            <person name="Lapidus A."/>
            <person name="Copeland A."/>
            <person name="Nolan M."/>
            <person name="Land M."/>
            <person name="Ivanova N."/>
            <person name="Mavromatis K."/>
            <person name="Markowitz V."/>
            <person name="Kyrpides N."/>
            <person name="Melino V."/>
            <person name="Denton M."/>
            <person name="Yates R."/>
            <person name="Howieson J."/>
        </authorList>
    </citation>
    <scope>NUCLEOTIDE SEQUENCE [LARGE SCALE GENOMIC DNA]</scope>
    <source>
        <strain>WSM2304</strain>
    </source>
</reference>
<protein>
    <recommendedName>
        <fullName evidence="1">Probable RNA 2'-phosphotransferase</fullName>
        <ecNumber evidence="1">2.7.1.-</ecNumber>
    </recommendedName>
</protein>
<sequence>MTQAKLETEVSKYMSYVLRHAPEAAGLTLDAEGWVSFDELEKALTSKYDVSRADIIEIVENNPKNRFTIVDNRIRANQGHSVDVDLALTPVEPPAALYHGTSSANWHSIEREGLKKMQRHHVHLSADVETAKIVATRRKGEYLILRVDAARMFSEGHSFFVSDNGVWLAESVPVQYLSPDAGTP</sequence>
<evidence type="ECO:0000255" key="1">
    <source>
        <dbReference type="HAMAP-Rule" id="MF_00299"/>
    </source>
</evidence>
<comment type="function">
    <text evidence="1">Removes the 2'-phosphate from RNA via an intermediate in which the phosphate is ADP-ribosylated by NAD followed by a presumed transesterification to release the RNA and generate ADP-ribose 1''-2''-cyclic phosphate (APPR&gt;P). May function as an ADP-ribosylase.</text>
</comment>
<comment type="similarity">
    <text evidence="1">Belongs to the KptA/TPT1 family.</text>
</comment>
<proteinExistence type="inferred from homology"/>